<organism>
    <name type="scientific">Colwellia psychrerythraea (strain 34H / ATCC BAA-681)</name>
    <name type="common">Vibrio psychroerythus</name>
    <dbReference type="NCBI Taxonomy" id="167879"/>
    <lineage>
        <taxon>Bacteria</taxon>
        <taxon>Pseudomonadati</taxon>
        <taxon>Pseudomonadota</taxon>
        <taxon>Gammaproteobacteria</taxon>
        <taxon>Alteromonadales</taxon>
        <taxon>Colwelliaceae</taxon>
        <taxon>Colwellia</taxon>
    </lineage>
</organism>
<sequence length="393" mass="43303">MKIYFDENMPFAKEFFSELCHLNNGIDGEEQGELVPFSGRTLTAAQVADADVLLVRSITQVNEQLLHLNDKISFVGSATIGTDHIDLSYLAKRNITFQSAPGCNAISVAEYVLSALVVLAERYLLTLSSLTVGIVGGGNTGTRLSEKLTALGIQHKICDPLLAEKQKQDKSHPPTDQRHYVPLVDVLACDVISLHVPKVVGGEHPTNKLINAENLALLREDQILISACRGDVIDNHALLALKTAGHGVKIVLDVWQGEPDVLEALIPYTEIATAHIAGYSLEGKARGSEMLYQALCQQLAITPKYQLANFLPSASIPAIEINQDFNQILLNQLVKMVYDVRRDDAIFRQQLFVQGFDSLRKNYPVRREFSAVTVNLSSTTYSDVPHRLGFNKN</sequence>
<feature type="chain" id="PRO_0000297438" description="Erythronate-4-phosphate dehydrogenase">
    <location>
        <begin position="1"/>
        <end position="393"/>
    </location>
</feature>
<feature type="active site" evidence="1">
    <location>
        <position position="229"/>
    </location>
</feature>
<feature type="active site" evidence="1">
    <location>
        <position position="258"/>
    </location>
</feature>
<feature type="active site" description="Proton donor" evidence="1">
    <location>
        <position position="275"/>
    </location>
</feature>
<feature type="binding site" evidence="1">
    <location>
        <position position="57"/>
    </location>
    <ligand>
        <name>substrate</name>
    </ligand>
</feature>
<feature type="binding site" evidence="1">
    <location>
        <position position="79"/>
    </location>
    <ligand>
        <name>substrate</name>
    </ligand>
</feature>
<feature type="binding site" evidence="1">
    <location>
        <position position="159"/>
    </location>
    <ligand>
        <name>NAD(+)</name>
        <dbReference type="ChEBI" id="CHEBI:57540"/>
    </ligand>
</feature>
<feature type="binding site" evidence="1">
    <location>
        <position position="253"/>
    </location>
    <ligand>
        <name>NAD(+)</name>
        <dbReference type="ChEBI" id="CHEBI:57540"/>
    </ligand>
</feature>
<feature type="binding site" evidence="1">
    <location>
        <position position="278"/>
    </location>
    <ligand>
        <name>NAD(+)</name>
        <dbReference type="ChEBI" id="CHEBI:57540"/>
    </ligand>
</feature>
<feature type="binding site" evidence="1">
    <location>
        <position position="279"/>
    </location>
    <ligand>
        <name>substrate</name>
    </ligand>
</feature>
<dbReference type="EC" id="1.1.1.290" evidence="1"/>
<dbReference type="EMBL" id="CP000083">
    <property type="protein sequence ID" value="AAZ25306.1"/>
    <property type="molecule type" value="Genomic_DNA"/>
</dbReference>
<dbReference type="RefSeq" id="WP_011044555.1">
    <property type="nucleotide sequence ID" value="NC_003910.7"/>
</dbReference>
<dbReference type="SMR" id="Q47XK1"/>
<dbReference type="STRING" id="167879.CPS_3806"/>
<dbReference type="KEGG" id="cps:CPS_3806"/>
<dbReference type="HOGENOM" id="CLU_019796_4_0_6"/>
<dbReference type="UniPathway" id="UPA00244">
    <property type="reaction ID" value="UER00310"/>
</dbReference>
<dbReference type="Proteomes" id="UP000000547">
    <property type="component" value="Chromosome"/>
</dbReference>
<dbReference type="GO" id="GO:0005737">
    <property type="term" value="C:cytoplasm"/>
    <property type="evidence" value="ECO:0007669"/>
    <property type="project" value="UniProtKB-SubCell"/>
</dbReference>
<dbReference type="GO" id="GO:0033711">
    <property type="term" value="F:4-phosphoerythronate dehydrogenase activity"/>
    <property type="evidence" value="ECO:0007669"/>
    <property type="project" value="UniProtKB-EC"/>
</dbReference>
<dbReference type="GO" id="GO:0051287">
    <property type="term" value="F:NAD binding"/>
    <property type="evidence" value="ECO:0007669"/>
    <property type="project" value="InterPro"/>
</dbReference>
<dbReference type="GO" id="GO:0046983">
    <property type="term" value="F:protein dimerization activity"/>
    <property type="evidence" value="ECO:0007669"/>
    <property type="project" value="InterPro"/>
</dbReference>
<dbReference type="GO" id="GO:0008615">
    <property type="term" value="P:pyridoxine biosynthetic process"/>
    <property type="evidence" value="ECO:0007669"/>
    <property type="project" value="UniProtKB-UniRule"/>
</dbReference>
<dbReference type="CDD" id="cd12158">
    <property type="entry name" value="ErythrP_dh"/>
    <property type="match status" value="1"/>
</dbReference>
<dbReference type="Gene3D" id="3.30.1370.170">
    <property type="match status" value="1"/>
</dbReference>
<dbReference type="Gene3D" id="3.40.50.720">
    <property type="entry name" value="NAD(P)-binding Rossmann-like Domain"/>
    <property type="match status" value="2"/>
</dbReference>
<dbReference type="HAMAP" id="MF_01825">
    <property type="entry name" value="PdxB"/>
    <property type="match status" value="1"/>
</dbReference>
<dbReference type="InterPro" id="IPR050223">
    <property type="entry name" value="D-isomer_2-hydroxyacid_DH"/>
</dbReference>
<dbReference type="InterPro" id="IPR006139">
    <property type="entry name" value="D-isomer_2_OHA_DH_cat_dom"/>
</dbReference>
<dbReference type="InterPro" id="IPR006140">
    <property type="entry name" value="D-isomer_DH_NAD-bd"/>
</dbReference>
<dbReference type="InterPro" id="IPR020921">
    <property type="entry name" value="Erythronate-4-P_DHase"/>
</dbReference>
<dbReference type="InterPro" id="IPR024531">
    <property type="entry name" value="Erythronate-4-P_DHase_dimer"/>
</dbReference>
<dbReference type="InterPro" id="IPR036291">
    <property type="entry name" value="NAD(P)-bd_dom_sf"/>
</dbReference>
<dbReference type="InterPro" id="IPR038251">
    <property type="entry name" value="PdxB_dimer_sf"/>
</dbReference>
<dbReference type="PANTHER" id="PTHR10996">
    <property type="entry name" value="2-HYDROXYACID DEHYDROGENASE-RELATED"/>
    <property type="match status" value="1"/>
</dbReference>
<dbReference type="Pfam" id="PF00389">
    <property type="entry name" value="2-Hacid_dh"/>
    <property type="match status" value="1"/>
</dbReference>
<dbReference type="Pfam" id="PF02826">
    <property type="entry name" value="2-Hacid_dh_C"/>
    <property type="match status" value="1"/>
</dbReference>
<dbReference type="Pfam" id="PF11890">
    <property type="entry name" value="DUF3410"/>
    <property type="match status" value="1"/>
</dbReference>
<dbReference type="SUPFAM" id="SSF52283">
    <property type="entry name" value="Formate/glycerate dehydrogenase catalytic domain-like"/>
    <property type="match status" value="1"/>
</dbReference>
<dbReference type="SUPFAM" id="SSF51735">
    <property type="entry name" value="NAD(P)-binding Rossmann-fold domains"/>
    <property type="match status" value="1"/>
</dbReference>
<evidence type="ECO:0000255" key="1">
    <source>
        <dbReference type="HAMAP-Rule" id="MF_01825"/>
    </source>
</evidence>
<keyword id="KW-0963">Cytoplasm</keyword>
<keyword id="KW-0520">NAD</keyword>
<keyword id="KW-0560">Oxidoreductase</keyword>
<keyword id="KW-0664">Pyridoxine biosynthesis</keyword>
<accession>Q47XK1</accession>
<name>PDXB_COLP3</name>
<proteinExistence type="inferred from homology"/>
<comment type="function">
    <text evidence="1">Catalyzes the oxidation of erythronate-4-phosphate to 3-hydroxy-2-oxo-4-phosphonooxybutanoate.</text>
</comment>
<comment type="catalytic activity">
    <reaction evidence="1">
        <text>4-phospho-D-erythronate + NAD(+) = (R)-3-hydroxy-2-oxo-4-phosphooxybutanoate + NADH + H(+)</text>
        <dbReference type="Rhea" id="RHEA:18829"/>
        <dbReference type="ChEBI" id="CHEBI:15378"/>
        <dbReference type="ChEBI" id="CHEBI:57540"/>
        <dbReference type="ChEBI" id="CHEBI:57945"/>
        <dbReference type="ChEBI" id="CHEBI:58538"/>
        <dbReference type="ChEBI" id="CHEBI:58766"/>
        <dbReference type="EC" id="1.1.1.290"/>
    </reaction>
</comment>
<comment type="pathway">
    <text evidence="1">Cofactor biosynthesis; pyridoxine 5'-phosphate biosynthesis; pyridoxine 5'-phosphate from D-erythrose 4-phosphate: step 2/5.</text>
</comment>
<comment type="subunit">
    <text evidence="1">Homodimer.</text>
</comment>
<comment type="subcellular location">
    <subcellularLocation>
        <location evidence="1">Cytoplasm</location>
    </subcellularLocation>
</comment>
<comment type="similarity">
    <text evidence="1">Belongs to the D-isomer specific 2-hydroxyacid dehydrogenase family. PdxB subfamily.</text>
</comment>
<protein>
    <recommendedName>
        <fullName evidence="1">Erythronate-4-phosphate dehydrogenase</fullName>
        <ecNumber evidence="1">1.1.1.290</ecNumber>
    </recommendedName>
</protein>
<gene>
    <name evidence="1" type="primary">pdxB</name>
    <name type="ordered locus">CPS_3806</name>
</gene>
<reference key="1">
    <citation type="journal article" date="2005" name="Proc. Natl. Acad. Sci. U.S.A.">
        <title>The psychrophilic lifestyle as revealed by the genome sequence of Colwellia psychrerythraea 34H through genomic and proteomic analyses.</title>
        <authorList>
            <person name="Methe B.A."/>
            <person name="Nelson K.E."/>
            <person name="Deming J.W."/>
            <person name="Momen B."/>
            <person name="Melamud E."/>
            <person name="Zhang X."/>
            <person name="Moult J."/>
            <person name="Madupu R."/>
            <person name="Nelson W.C."/>
            <person name="Dodson R.J."/>
            <person name="Brinkac L.M."/>
            <person name="Daugherty S.C."/>
            <person name="Durkin A.S."/>
            <person name="DeBoy R.T."/>
            <person name="Kolonay J.F."/>
            <person name="Sullivan S.A."/>
            <person name="Zhou L."/>
            <person name="Davidsen T.M."/>
            <person name="Wu M."/>
            <person name="Huston A.L."/>
            <person name="Lewis M."/>
            <person name="Weaver B."/>
            <person name="Weidman J.F."/>
            <person name="Khouri H."/>
            <person name="Utterback T.R."/>
            <person name="Feldblyum T.V."/>
            <person name="Fraser C.M."/>
        </authorList>
    </citation>
    <scope>NUCLEOTIDE SEQUENCE [LARGE SCALE GENOMIC DNA]</scope>
    <source>
        <strain>34H / ATCC BAA-681</strain>
    </source>
</reference>